<organism>
    <name type="scientific">Archaeoglobus fulgidus (strain ATCC 49558 / DSM 4304 / JCM 9628 / NBRC 100126 / VC-16)</name>
    <dbReference type="NCBI Taxonomy" id="224325"/>
    <lineage>
        <taxon>Archaea</taxon>
        <taxon>Methanobacteriati</taxon>
        <taxon>Methanobacteriota</taxon>
        <taxon>Archaeoglobi</taxon>
        <taxon>Archaeoglobales</taxon>
        <taxon>Archaeoglobaceae</taxon>
        <taxon>Archaeoglobus</taxon>
    </lineage>
</organism>
<proteinExistence type="inferred from homology"/>
<protein>
    <recommendedName>
        <fullName>Cytidylate kinase</fullName>
        <shortName>CK</shortName>
        <ecNumber>2.7.4.25</ecNumber>
    </recommendedName>
    <alternativeName>
        <fullName>Cytidine monophosphate kinase</fullName>
        <shortName>CMP kinase</shortName>
    </alternativeName>
</protein>
<reference key="1">
    <citation type="journal article" date="1997" name="Nature">
        <title>The complete genome sequence of the hyperthermophilic, sulphate-reducing archaeon Archaeoglobus fulgidus.</title>
        <authorList>
            <person name="Klenk H.-P."/>
            <person name="Clayton R.A."/>
            <person name="Tomb J.-F."/>
            <person name="White O."/>
            <person name="Nelson K.E."/>
            <person name="Ketchum K.A."/>
            <person name="Dodson R.J."/>
            <person name="Gwinn M.L."/>
            <person name="Hickey E.K."/>
            <person name="Peterson J.D."/>
            <person name="Richardson D.L."/>
            <person name="Kerlavage A.R."/>
            <person name="Graham D.E."/>
            <person name="Kyrpides N.C."/>
            <person name="Fleischmann R.D."/>
            <person name="Quackenbush J."/>
            <person name="Lee N.H."/>
            <person name="Sutton G.G."/>
            <person name="Gill S.R."/>
            <person name="Kirkness E.F."/>
            <person name="Dougherty B.A."/>
            <person name="McKenney K."/>
            <person name="Adams M.D."/>
            <person name="Loftus B.J."/>
            <person name="Peterson S.N."/>
            <person name="Reich C.I."/>
            <person name="McNeil L.K."/>
            <person name="Badger J.H."/>
            <person name="Glodek A."/>
            <person name="Zhou L."/>
            <person name="Overbeek R."/>
            <person name="Gocayne J.D."/>
            <person name="Weidman J.F."/>
            <person name="McDonald L.A."/>
            <person name="Utterback T.R."/>
            <person name="Cotton M.D."/>
            <person name="Spriggs T."/>
            <person name="Artiach P."/>
            <person name="Kaine B.P."/>
            <person name="Sykes S.M."/>
            <person name="Sadow P.W."/>
            <person name="D'Andrea K.P."/>
            <person name="Bowman C."/>
            <person name="Fujii C."/>
            <person name="Garland S.A."/>
            <person name="Mason T.M."/>
            <person name="Olsen G.J."/>
            <person name="Fraser C.M."/>
            <person name="Smith H.O."/>
            <person name="Woese C.R."/>
            <person name="Venter J.C."/>
        </authorList>
    </citation>
    <scope>NUCLEOTIDE SEQUENCE [LARGE SCALE GENOMIC DNA]</scope>
    <source>
        <strain>ATCC 49558 / DSM 4304 / JCM 9628 / NBRC 100126 / VC-16</strain>
    </source>
</reference>
<comment type="catalytic activity">
    <reaction>
        <text>CMP + ATP = CDP + ADP</text>
        <dbReference type="Rhea" id="RHEA:11600"/>
        <dbReference type="ChEBI" id="CHEBI:30616"/>
        <dbReference type="ChEBI" id="CHEBI:58069"/>
        <dbReference type="ChEBI" id="CHEBI:60377"/>
        <dbReference type="ChEBI" id="CHEBI:456216"/>
        <dbReference type="EC" id="2.7.4.25"/>
    </reaction>
</comment>
<comment type="catalytic activity">
    <reaction>
        <text>dCMP + ATP = dCDP + ADP</text>
        <dbReference type="Rhea" id="RHEA:25094"/>
        <dbReference type="ChEBI" id="CHEBI:30616"/>
        <dbReference type="ChEBI" id="CHEBI:57566"/>
        <dbReference type="ChEBI" id="CHEBI:58593"/>
        <dbReference type="ChEBI" id="CHEBI:456216"/>
        <dbReference type="EC" id="2.7.4.25"/>
    </reaction>
</comment>
<comment type="subcellular location">
    <subcellularLocation>
        <location evidence="1">Cytoplasm</location>
    </subcellularLocation>
</comment>
<comment type="similarity">
    <text evidence="2">Belongs to the cytidylate kinase family. Type 2 subfamily.</text>
</comment>
<feature type="chain" id="PRO_0000132009" description="Cytidylate kinase">
    <location>
        <begin position="1"/>
        <end position="180"/>
    </location>
</feature>
<feature type="binding site" evidence="1">
    <location>
        <begin position="7"/>
        <end position="15"/>
    </location>
    <ligand>
        <name>ATP</name>
        <dbReference type="ChEBI" id="CHEBI:30616"/>
    </ligand>
</feature>
<sequence>MKITISGPPGSGTTTVAKIVAEKLGLKLISAGDVFRQLAAKKGMTVEEFSQYAEENPEIDRLIDQTQKEMAEKEKNVVVEGRLSGWFVKNADLKVWIFADPEVRYSRIAKREGKDLTVVRQETRLREEFEKRRYWKFYSIDIDNWTIYDLIINSGSFDAEGVVEIILKAVEVKKIKVDQK</sequence>
<evidence type="ECO:0000250" key="1"/>
<evidence type="ECO:0000305" key="2"/>
<keyword id="KW-0067">ATP-binding</keyword>
<keyword id="KW-0963">Cytoplasm</keyword>
<keyword id="KW-0418">Kinase</keyword>
<keyword id="KW-0547">Nucleotide-binding</keyword>
<keyword id="KW-1185">Reference proteome</keyword>
<keyword id="KW-0808">Transferase</keyword>
<gene>
    <name type="primary">cmk</name>
    <name type="ordered locus">AF_1900</name>
</gene>
<dbReference type="EC" id="2.7.4.25"/>
<dbReference type="EMBL" id="AE000782">
    <property type="protein sequence ID" value="AAB89349.1"/>
    <property type="molecule type" value="Genomic_DNA"/>
</dbReference>
<dbReference type="PIR" id="C69487">
    <property type="entry name" value="C69487"/>
</dbReference>
<dbReference type="RefSeq" id="WP_010879393.1">
    <property type="nucleotide sequence ID" value="NC_000917.1"/>
</dbReference>
<dbReference type="SMR" id="O28379"/>
<dbReference type="STRING" id="224325.AF_1900"/>
<dbReference type="PaxDb" id="224325-AF_1900"/>
<dbReference type="EnsemblBacteria" id="AAB89349">
    <property type="protein sequence ID" value="AAB89349"/>
    <property type="gene ID" value="AF_1900"/>
</dbReference>
<dbReference type="GeneID" id="24795644"/>
<dbReference type="KEGG" id="afu:AF_1900"/>
<dbReference type="eggNOG" id="arCOG01037">
    <property type="taxonomic scope" value="Archaea"/>
</dbReference>
<dbReference type="HOGENOM" id="CLU_079959_1_0_2"/>
<dbReference type="OrthoDB" id="31096at2157"/>
<dbReference type="PhylomeDB" id="O28379"/>
<dbReference type="Proteomes" id="UP000002199">
    <property type="component" value="Chromosome"/>
</dbReference>
<dbReference type="GO" id="GO:0005737">
    <property type="term" value="C:cytoplasm"/>
    <property type="evidence" value="ECO:0007669"/>
    <property type="project" value="UniProtKB-SubCell"/>
</dbReference>
<dbReference type="GO" id="GO:0005524">
    <property type="term" value="F:ATP binding"/>
    <property type="evidence" value="ECO:0007669"/>
    <property type="project" value="UniProtKB-UniRule"/>
</dbReference>
<dbReference type="GO" id="GO:0036430">
    <property type="term" value="F:CMP kinase activity"/>
    <property type="evidence" value="ECO:0007669"/>
    <property type="project" value="RHEA"/>
</dbReference>
<dbReference type="GO" id="GO:0036431">
    <property type="term" value="F:dCMP kinase activity"/>
    <property type="evidence" value="ECO:0007669"/>
    <property type="project" value="RHEA"/>
</dbReference>
<dbReference type="GO" id="GO:0006220">
    <property type="term" value="P:pyrimidine nucleotide metabolic process"/>
    <property type="evidence" value="ECO:0007669"/>
    <property type="project" value="UniProtKB-UniRule"/>
</dbReference>
<dbReference type="CDD" id="cd02020">
    <property type="entry name" value="CMPK"/>
    <property type="match status" value="1"/>
</dbReference>
<dbReference type="Gene3D" id="3.40.50.300">
    <property type="entry name" value="P-loop containing nucleotide triphosphate hydrolases"/>
    <property type="match status" value="1"/>
</dbReference>
<dbReference type="HAMAP" id="MF_00239">
    <property type="entry name" value="Cytidyl_kinase_type2"/>
    <property type="match status" value="1"/>
</dbReference>
<dbReference type="InterPro" id="IPR011892">
    <property type="entry name" value="Cyt_kin_arch"/>
</dbReference>
<dbReference type="InterPro" id="IPR052922">
    <property type="entry name" value="Cytidylate_Kinase-2"/>
</dbReference>
<dbReference type="InterPro" id="IPR011994">
    <property type="entry name" value="Cytidylate_kinase_dom"/>
</dbReference>
<dbReference type="InterPro" id="IPR027417">
    <property type="entry name" value="P-loop_NTPase"/>
</dbReference>
<dbReference type="NCBIfam" id="TIGR02173">
    <property type="entry name" value="cyt_kin_arch"/>
    <property type="match status" value="1"/>
</dbReference>
<dbReference type="PANTHER" id="PTHR37816:SF2">
    <property type="entry name" value="DNA TOPOLOGY MODULATION PROTEIN FLAR-RELATED PROTEIN"/>
    <property type="match status" value="1"/>
</dbReference>
<dbReference type="PANTHER" id="PTHR37816">
    <property type="entry name" value="YALI0E33011P"/>
    <property type="match status" value="1"/>
</dbReference>
<dbReference type="Pfam" id="PF13189">
    <property type="entry name" value="Cytidylate_kin2"/>
    <property type="match status" value="1"/>
</dbReference>
<dbReference type="SUPFAM" id="SSF52540">
    <property type="entry name" value="P-loop containing nucleoside triphosphate hydrolases"/>
    <property type="match status" value="1"/>
</dbReference>
<name>KCY_ARCFU</name>
<accession>O28379</accession>